<evidence type="ECO:0000255" key="1">
    <source>
        <dbReference type="HAMAP-Rule" id="MF_00036"/>
    </source>
</evidence>
<name>SYA_BACTN</name>
<accession>Q8A0M6</accession>
<dbReference type="EC" id="6.1.1.7" evidence="1"/>
<dbReference type="EMBL" id="AE015928">
    <property type="protein sequence ID" value="AAO79100.1"/>
    <property type="molecule type" value="Genomic_DNA"/>
</dbReference>
<dbReference type="RefSeq" id="NP_812906.1">
    <property type="nucleotide sequence ID" value="NC_004663.1"/>
</dbReference>
<dbReference type="RefSeq" id="WP_011109057.1">
    <property type="nucleotide sequence ID" value="NC_004663.1"/>
</dbReference>
<dbReference type="SMR" id="Q8A0M6"/>
<dbReference type="FunCoup" id="Q8A0M6">
    <property type="interactions" value="557"/>
</dbReference>
<dbReference type="STRING" id="226186.BT_3995"/>
<dbReference type="PaxDb" id="226186-BT_3995"/>
<dbReference type="EnsemblBacteria" id="AAO79100">
    <property type="protein sequence ID" value="AAO79100"/>
    <property type="gene ID" value="BT_3995"/>
</dbReference>
<dbReference type="GeneID" id="60925168"/>
<dbReference type="KEGG" id="bth:BT_3995"/>
<dbReference type="PATRIC" id="fig|226186.12.peg.4061"/>
<dbReference type="eggNOG" id="COG0013">
    <property type="taxonomic scope" value="Bacteria"/>
</dbReference>
<dbReference type="HOGENOM" id="CLU_004485_1_1_10"/>
<dbReference type="InParanoid" id="Q8A0M6"/>
<dbReference type="OrthoDB" id="9803884at2"/>
<dbReference type="Proteomes" id="UP000001414">
    <property type="component" value="Chromosome"/>
</dbReference>
<dbReference type="GO" id="GO:0005737">
    <property type="term" value="C:cytoplasm"/>
    <property type="evidence" value="ECO:0007669"/>
    <property type="project" value="UniProtKB-SubCell"/>
</dbReference>
<dbReference type="GO" id="GO:0004813">
    <property type="term" value="F:alanine-tRNA ligase activity"/>
    <property type="evidence" value="ECO:0000318"/>
    <property type="project" value="GO_Central"/>
</dbReference>
<dbReference type="GO" id="GO:0002161">
    <property type="term" value="F:aminoacyl-tRNA deacylase activity"/>
    <property type="evidence" value="ECO:0000318"/>
    <property type="project" value="GO_Central"/>
</dbReference>
<dbReference type="GO" id="GO:0005524">
    <property type="term" value="F:ATP binding"/>
    <property type="evidence" value="ECO:0007669"/>
    <property type="project" value="UniProtKB-UniRule"/>
</dbReference>
<dbReference type="GO" id="GO:0000049">
    <property type="term" value="F:tRNA binding"/>
    <property type="evidence" value="ECO:0007669"/>
    <property type="project" value="UniProtKB-KW"/>
</dbReference>
<dbReference type="GO" id="GO:0008270">
    <property type="term" value="F:zinc ion binding"/>
    <property type="evidence" value="ECO:0007669"/>
    <property type="project" value="UniProtKB-UniRule"/>
</dbReference>
<dbReference type="GO" id="GO:0006419">
    <property type="term" value="P:alanyl-tRNA aminoacylation"/>
    <property type="evidence" value="ECO:0000318"/>
    <property type="project" value="GO_Central"/>
</dbReference>
<dbReference type="CDD" id="cd00673">
    <property type="entry name" value="AlaRS_core"/>
    <property type="match status" value="1"/>
</dbReference>
<dbReference type="FunFam" id="2.40.30.130:FF:000008">
    <property type="entry name" value="Alanine--tRNA ligase"/>
    <property type="match status" value="1"/>
</dbReference>
<dbReference type="FunFam" id="3.10.310.40:FF:000001">
    <property type="entry name" value="Alanine--tRNA ligase"/>
    <property type="match status" value="1"/>
</dbReference>
<dbReference type="FunFam" id="3.30.54.20:FF:000001">
    <property type="entry name" value="Alanine--tRNA ligase"/>
    <property type="match status" value="1"/>
</dbReference>
<dbReference type="FunFam" id="3.30.930.10:FF:000011">
    <property type="entry name" value="Alanine--tRNA ligase, cytoplasmic"/>
    <property type="match status" value="1"/>
</dbReference>
<dbReference type="FunFam" id="3.30.980.10:FF:000004">
    <property type="entry name" value="Alanine--tRNA ligase, cytoplasmic"/>
    <property type="match status" value="1"/>
</dbReference>
<dbReference type="Gene3D" id="2.40.30.130">
    <property type="match status" value="1"/>
</dbReference>
<dbReference type="Gene3D" id="3.10.310.40">
    <property type="match status" value="1"/>
</dbReference>
<dbReference type="Gene3D" id="3.30.54.20">
    <property type="match status" value="1"/>
</dbReference>
<dbReference type="Gene3D" id="3.30.930.10">
    <property type="entry name" value="Bira Bifunctional Protein, Domain 2"/>
    <property type="match status" value="1"/>
</dbReference>
<dbReference type="Gene3D" id="3.30.980.10">
    <property type="entry name" value="Threonyl-trna Synthetase, Chain A, domain 2"/>
    <property type="match status" value="1"/>
</dbReference>
<dbReference type="HAMAP" id="MF_00036_B">
    <property type="entry name" value="Ala_tRNA_synth_B"/>
    <property type="match status" value="1"/>
</dbReference>
<dbReference type="InterPro" id="IPR045864">
    <property type="entry name" value="aa-tRNA-synth_II/BPL/LPL"/>
</dbReference>
<dbReference type="InterPro" id="IPR002318">
    <property type="entry name" value="Ala-tRNA-lgiase_IIc"/>
</dbReference>
<dbReference type="InterPro" id="IPR018162">
    <property type="entry name" value="Ala-tRNA-ligase_IIc_anticod-bd"/>
</dbReference>
<dbReference type="InterPro" id="IPR018165">
    <property type="entry name" value="Ala-tRNA-synth_IIc_core"/>
</dbReference>
<dbReference type="InterPro" id="IPR018164">
    <property type="entry name" value="Ala-tRNA-synth_IIc_N"/>
</dbReference>
<dbReference type="InterPro" id="IPR050058">
    <property type="entry name" value="Ala-tRNA_ligase"/>
</dbReference>
<dbReference type="InterPro" id="IPR023033">
    <property type="entry name" value="Ala_tRNA_ligase_euk/bac"/>
</dbReference>
<dbReference type="InterPro" id="IPR003156">
    <property type="entry name" value="DHHA1_dom"/>
</dbReference>
<dbReference type="InterPro" id="IPR018163">
    <property type="entry name" value="Thr/Ala-tRNA-synth_IIc_edit"/>
</dbReference>
<dbReference type="InterPro" id="IPR009000">
    <property type="entry name" value="Transl_B-barrel_sf"/>
</dbReference>
<dbReference type="InterPro" id="IPR012947">
    <property type="entry name" value="tRNA_SAD"/>
</dbReference>
<dbReference type="NCBIfam" id="TIGR00344">
    <property type="entry name" value="alaS"/>
    <property type="match status" value="1"/>
</dbReference>
<dbReference type="PANTHER" id="PTHR11777:SF9">
    <property type="entry name" value="ALANINE--TRNA LIGASE, CYTOPLASMIC"/>
    <property type="match status" value="1"/>
</dbReference>
<dbReference type="PANTHER" id="PTHR11777">
    <property type="entry name" value="ALANYL-TRNA SYNTHETASE"/>
    <property type="match status" value="1"/>
</dbReference>
<dbReference type="Pfam" id="PF02272">
    <property type="entry name" value="DHHA1"/>
    <property type="match status" value="1"/>
</dbReference>
<dbReference type="Pfam" id="PF01411">
    <property type="entry name" value="tRNA-synt_2c"/>
    <property type="match status" value="1"/>
</dbReference>
<dbReference type="Pfam" id="PF07973">
    <property type="entry name" value="tRNA_SAD"/>
    <property type="match status" value="1"/>
</dbReference>
<dbReference type="PRINTS" id="PR00980">
    <property type="entry name" value="TRNASYNTHALA"/>
</dbReference>
<dbReference type="SMART" id="SM00863">
    <property type="entry name" value="tRNA_SAD"/>
    <property type="match status" value="1"/>
</dbReference>
<dbReference type="SUPFAM" id="SSF55681">
    <property type="entry name" value="Class II aaRS and biotin synthetases"/>
    <property type="match status" value="1"/>
</dbReference>
<dbReference type="SUPFAM" id="SSF101353">
    <property type="entry name" value="Putative anticodon-binding domain of alanyl-tRNA synthetase (AlaRS)"/>
    <property type="match status" value="1"/>
</dbReference>
<dbReference type="SUPFAM" id="SSF55186">
    <property type="entry name" value="ThrRS/AlaRS common domain"/>
    <property type="match status" value="1"/>
</dbReference>
<dbReference type="SUPFAM" id="SSF50447">
    <property type="entry name" value="Translation proteins"/>
    <property type="match status" value="1"/>
</dbReference>
<dbReference type="PROSITE" id="PS50860">
    <property type="entry name" value="AA_TRNA_LIGASE_II_ALA"/>
    <property type="match status" value="1"/>
</dbReference>
<protein>
    <recommendedName>
        <fullName evidence="1">Alanine--tRNA ligase</fullName>
        <ecNumber evidence="1">6.1.1.7</ecNumber>
    </recommendedName>
    <alternativeName>
        <fullName evidence="1">Alanyl-tRNA synthetase</fullName>
        <shortName evidence="1">AlaRS</shortName>
    </alternativeName>
</protein>
<comment type="function">
    <text evidence="1">Catalyzes the attachment of alanine to tRNA(Ala) in a two-step reaction: alanine is first activated by ATP to form Ala-AMP and then transferred to the acceptor end of tRNA(Ala). Also edits incorrectly charged Ser-tRNA(Ala) and Gly-tRNA(Ala) via its editing domain.</text>
</comment>
<comment type="catalytic activity">
    <reaction evidence="1">
        <text>tRNA(Ala) + L-alanine + ATP = L-alanyl-tRNA(Ala) + AMP + diphosphate</text>
        <dbReference type="Rhea" id="RHEA:12540"/>
        <dbReference type="Rhea" id="RHEA-COMP:9657"/>
        <dbReference type="Rhea" id="RHEA-COMP:9923"/>
        <dbReference type="ChEBI" id="CHEBI:30616"/>
        <dbReference type="ChEBI" id="CHEBI:33019"/>
        <dbReference type="ChEBI" id="CHEBI:57972"/>
        <dbReference type="ChEBI" id="CHEBI:78442"/>
        <dbReference type="ChEBI" id="CHEBI:78497"/>
        <dbReference type="ChEBI" id="CHEBI:456215"/>
        <dbReference type="EC" id="6.1.1.7"/>
    </reaction>
</comment>
<comment type="cofactor">
    <cofactor evidence="1">
        <name>Zn(2+)</name>
        <dbReference type="ChEBI" id="CHEBI:29105"/>
    </cofactor>
    <text evidence="1">Binds 1 zinc ion per subunit.</text>
</comment>
<comment type="subcellular location">
    <subcellularLocation>
        <location evidence="1">Cytoplasm</location>
    </subcellularLocation>
</comment>
<comment type="domain">
    <text evidence="1">Consists of three domains; the N-terminal catalytic domain, the editing domain and the C-terminal C-Ala domain. The editing domain removes incorrectly charged amino acids, while the C-Ala domain, along with tRNA(Ala), serves as a bridge to cooperatively bring together the editing and aminoacylation centers thus stimulating deacylation of misacylated tRNAs.</text>
</comment>
<comment type="similarity">
    <text evidence="1">Belongs to the class-II aminoacyl-tRNA synthetase family.</text>
</comment>
<gene>
    <name evidence="1" type="primary">alaS</name>
    <name type="ordered locus">BT_3995</name>
</gene>
<keyword id="KW-0030">Aminoacyl-tRNA synthetase</keyword>
<keyword id="KW-0067">ATP-binding</keyword>
<keyword id="KW-0963">Cytoplasm</keyword>
<keyword id="KW-0436">Ligase</keyword>
<keyword id="KW-0479">Metal-binding</keyword>
<keyword id="KW-0547">Nucleotide-binding</keyword>
<keyword id="KW-0648">Protein biosynthesis</keyword>
<keyword id="KW-1185">Reference proteome</keyword>
<keyword id="KW-0694">RNA-binding</keyword>
<keyword id="KW-0820">tRNA-binding</keyword>
<keyword id="KW-0862">Zinc</keyword>
<organism>
    <name type="scientific">Bacteroides thetaiotaomicron (strain ATCC 29148 / DSM 2079 / JCM 5827 / CCUG 10774 / NCTC 10582 / VPI-5482 / E50)</name>
    <dbReference type="NCBI Taxonomy" id="226186"/>
    <lineage>
        <taxon>Bacteria</taxon>
        <taxon>Pseudomonadati</taxon>
        <taxon>Bacteroidota</taxon>
        <taxon>Bacteroidia</taxon>
        <taxon>Bacteroidales</taxon>
        <taxon>Bacteroidaceae</taxon>
        <taxon>Bacteroides</taxon>
    </lineage>
</organism>
<reference key="1">
    <citation type="journal article" date="2003" name="Science">
        <title>A genomic view of the human-Bacteroides thetaiotaomicron symbiosis.</title>
        <authorList>
            <person name="Xu J."/>
            <person name="Bjursell M.K."/>
            <person name="Himrod J."/>
            <person name="Deng S."/>
            <person name="Carmichael L.K."/>
            <person name="Chiang H.C."/>
            <person name="Hooper L.V."/>
            <person name="Gordon J.I."/>
        </authorList>
    </citation>
    <scope>NUCLEOTIDE SEQUENCE [LARGE SCALE GENOMIC DNA]</scope>
    <source>
        <strain>ATCC 29148 / DSM 2079 / JCM 5827 / CCUG 10774 / NCTC 10582 / VPI-5482 / E50</strain>
    </source>
</reference>
<sequence>MLTAKEIRDSFKNFFESKGHHIVPSAPMVIKDDPTLMFTNAGMNQFKDIILGNHPAKYHRVADSQKCLRVSGKHNDLEEVGHDTYHHTMFEMLGNWSFGDYFKKEAINWAWEYLVEVLKLNPEHLYATVFEGSPEEGLSRDDEAASYWEQYLPKDHIINGNKHDNFWEMGDTGPCGPCSEIHIDLRPAEERAKISGRDLVNHDHPQVIEIWNLVFMQYNRKADGSLEPLPAKVIDTGMGFERLCMALQGKTSNYDTDVFQPMLKAIAAMSGTEYGKDKQQDIAMRVIADHIRTIAFSITDGQLPSNAKAGYVIRRILRRAVRYGYTFLGQKQSFMYKLLPVLIDNMGDAYPELIAQKGLIEKVIKEEEEAFLRTLETGIRLLDKTMGDTKAAGKTEISGKDAFTLYDTFGFPLDLTELILRENGMTVNIEEFNAEMQQQKQRARNAAAIETGDWVTLREGTTEFVGYDYTEYEASILRYRQIKQKNQTLYQIVLDCTPFYAESGGQVGDTGVLVSEFETIEVIDTKKENNLPIHITKKLPEHPEAPMMACVDTDKRAACAANHSATHLLDSALREVLGEHIEQKGSLVTPDSLRFDFSHFQKVTDEEIRQVEHLVNAKIRANIPLKEYRNIPIEEAKELGAIALFGEKYGERVRVIQFGSSIEFCGGIHVAATGNIGMVKIISESSVAAGVRRIEAYTGARVEEMLDTIQDTISELKSLFNNAPDLGIAIRKYIEENAGLKKQVEDYMKEKEASLKERLLKNIQEIHGIKVIKFCAPLPAEVVKNIAFQLRGEITENLFFVAGSLDNGKPMLTVMLSDNLVAGGLKAGNLVKEAAKLIQGGGGGQPHFATAGGKNTDGLNAAIEKVLELAGI</sequence>
<feature type="chain" id="PRO_0000075061" description="Alanine--tRNA ligase">
    <location>
        <begin position="1"/>
        <end position="872"/>
    </location>
</feature>
<feature type="binding site" evidence="1">
    <location>
        <position position="563"/>
    </location>
    <ligand>
        <name>Zn(2+)</name>
        <dbReference type="ChEBI" id="CHEBI:29105"/>
    </ligand>
</feature>
<feature type="binding site" evidence="1">
    <location>
        <position position="567"/>
    </location>
    <ligand>
        <name>Zn(2+)</name>
        <dbReference type="ChEBI" id="CHEBI:29105"/>
    </ligand>
</feature>
<feature type="binding site" evidence="1">
    <location>
        <position position="665"/>
    </location>
    <ligand>
        <name>Zn(2+)</name>
        <dbReference type="ChEBI" id="CHEBI:29105"/>
    </ligand>
</feature>
<feature type="binding site" evidence="1">
    <location>
        <position position="669"/>
    </location>
    <ligand>
        <name>Zn(2+)</name>
        <dbReference type="ChEBI" id="CHEBI:29105"/>
    </ligand>
</feature>
<proteinExistence type="inferred from homology"/>